<protein>
    <recommendedName>
        <fullName>GMP synthase [glutamine-hydrolyzing]</fullName>
        <ecNumber>6.3.5.2</ecNumber>
    </recommendedName>
    <alternativeName>
        <fullName>GMP synthetase</fullName>
    </alternativeName>
    <alternativeName>
        <fullName>Glutamine amidotransferase</fullName>
    </alternativeName>
</protein>
<reference key="1">
    <citation type="journal article" date="2000" name="Science">
        <title>Complete genome sequence of Neisseria meningitidis serogroup B strain MC58.</title>
        <authorList>
            <person name="Tettelin H."/>
            <person name="Saunders N.J."/>
            <person name="Heidelberg J.F."/>
            <person name="Jeffries A.C."/>
            <person name="Nelson K.E."/>
            <person name="Eisen J.A."/>
            <person name="Ketchum K.A."/>
            <person name="Hood D.W."/>
            <person name="Peden J.F."/>
            <person name="Dodson R.J."/>
            <person name="Nelson W.C."/>
            <person name="Gwinn M.L."/>
            <person name="DeBoy R.T."/>
            <person name="Peterson J.D."/>
            <person name="Hickey E.K."/>
            <person name="Haft D.H."/>
            <person name="Salzberg S.L."/>
            <person name="White O."/>
            <person name="Fleischmann R.D."/>
            <person name="Dougherty B.A."/>
            <person name="Mason T.M."/>
            <person name="Ciecko A."/>
            <person name="Parksey D.S."/>
            <person name="Blair E."/>
            <person name="Cittone H."/>
            <person name="Clark E.B."/>
            <person name="Cotton M.D."/>
            <person name="Utterback T.R."/>
            <person name="Khouri H.M."/>
            <person name="Qin H."/>
            <person name="Vamathevan J.J."/>
            <person name="Gill J."/>
            <person name="Scarlato V."/>
            <person name="Masignani V."/>
            <person name="Pizza M."/>
            <person name="Grandi G."/>
            <person name="Sun L."/>
            <person name="Smith H.O."/>
            <person name="Fraser C.M."/>
            <person name="Moxon E.R."/>
            <person name="Rappuoli R."/>
            <person name="Venter J.C."/>
        </authorList>
    </citation>
    <scope>NUCLEOTIDE SEQUENCE [LARGE SCALE GENOMIC DNA]</scope>
    <source>
        <strain>ATCC BAA-335 / MC58</strain>
    </source>
</reference>
<sequence>MTQDKILILDFGSQVTQLIARRVREAHVYCELHSFDMPLDEIKAFNPKGIILSGGPNSVYESDYQADTGIFDLGIPVLGICYGMQFMAHHLGGEVQPGNQREFGYAQVKTIDSELTRGIQDGEPNTLDVWMSHGDKVSKLPDGFAVIGNTPSCPIAMMENAEKQFYGIQFHPEVTHTKQGRALLNRFVLDICGAQPGWTMPNYIEEAVAKIREQVGSDEVILGLSGGVDSSVAAALIHRAIGDQLTCVFVDHGLLRLNESKMVMDMFARNLGVKVIHVDAEGQFMAKLAGVTDPEKKRKIIGAEFIEVFDAEEKKLTNAKWLAQGTIYPDVIESAGAKTKKAHAIKSHHNVGGLPENMKLKLLEPLRDLFKDEVRELGVALGLPREMVYRHPFPGPGLGVRILGEVKKEYADLLRQADDIFIQELRNTTDENGTSWYDLTSQAFAVFLPVKSVGVMGDGRTYDYVIALRAVITSDFMTAHWAELPYSLLGKVSNRIINEVKGINRVVYDVSGKPPATIEWE</sequence>
<feature type="chain" id="PRO_0000140152" description="GMP synthase [glutamine-hydrolyzing]">
    <location>
        <begin position="1"/>
        <end position="521"/>
    </location>
</feature>
<feature type="domain" description="Glutamine amidotransferase type-1">
    <location>
        <begin position="5"/>
        <end position="197"/>
    </location>
</feature>
<feature type="domain" description="GMPS ATP-PPase">
    <location>
        <begin position="198"/>
        <end position="390"/>
    </location>
</feature>
<feature type="active site" description="Nucleophile" evidence="1">
    <location>
        <position position="81"/>
    </location>
</feature>
<feature type="active site" evidence="1">
    <location>
        <position position="171"/>
    </location>
</feature>
<feature type="active site" evidence="1">
    <location>
        <position position="173"/>
    </location>
</feature>
<feature type="binding site" evidence="1">
    <location>
        <begin position="225"/>
        <end position="231"/>
    </location>
    <ligand>
        <name>ATP</name>
        <dbReference type="ChEBI" id="CHEBI:30616"/>
    </ligand>
</feature>
<gene>
    <name type="primary">guaA</name>
    <name type="ordered locus">NMB1920</name>
</gene>
<name>GUAA_NEIMB</name>
<accession>Q9JXR2</accession>
<comment type="function">
    <text evidence="1">Catalyzes the synthesis of GMP from XMP.</text>
</comment>
<comment type="catalytic activity">
    <reaction>
        <text>XMP + L-glutamine + ATP + H2O = GMP + L-glutamate + AMP + diphosphate + 2 H(+)</text>
        <dbReference type="Rhea" id="RHEA:11680"/>
        <dbReference type="ChEBI" id="CHEBI:15377"/>
        <dbReference type="ChEBI" id="CHEBI:15378"/>
        <dbReference type="ChEBI" id="CHEBI:29985"/>
        <dbReference type="ChEBI" id="CHEBI:30616"/>
        <dbReference type="ChEBI" id="CHEBI:33019"/>
        <dbReference type="ChEBI" id="CHEBI:57464"/>
        <dbReference type="ChEBI" id="CHEBI:58115"/>
        <dbReference type="ChEBI" id="CHEBI:58359"/>
        <dbReference type="ChEBI" id="CHEBI:456215"/>
        <dbReference type="EC" id="6.3.5.2"/>
    </reaction>
</comment>
<comment type="pathway">
    <text>Purine metabolism; GMP biosynthesis; GMP from XMP (L-Gln route): step 1/1.</text>
</comment>
<comment type="subunit">
    <text evidence="1">Homodimer.</text>
</comment>
<evidence type="ECO:0000250" key="1"/>
<organism>
    <name type="scientific">Neisseria meningitidis serogroup B (strain ATCC BAA-335 / MC58)</name>
    <dbReference type="NCBI Taxonomy" id="122586"/>
    <lineage>
        <taxon>Bacteria</taxon>
        <taxon>Pseudomonadati</taxon>
        <taxon>Pseudomonadota</taxon>
        <taxon>Betaproteobacteria</taxon>
        <taxon>Neisseriales</taxon>
        <taxon>Neisseriaceae</taxon>
        <taxon>Neisseria</taxon>
    </lineage>
</organism>
<proteinExistence type="inferred from homology"/>
<dbReference type="EC" id="6.3.5.2"/>
<dbReference type="EMBL" id="AE002098">
    <property type="protein sequence ID" value="AAF42250.1"/>
    <property type="molecule type" value="Genomic_DNA"/>
</dbReference>
<dbReference type="PIR" id="D81026">
    <property type="entry name" value="D81026"/>
</dbReference>
<dbReference type="RefSeq" id="NP_274914.1">
    <property type="nucleotide sequence ID" value="NC_003112.2"/>
</dbReference>
<dbReference type="RefSeq" id="WP_002223072.1">
    <property type="nucleotide sequence ID" value="NC_003112.2"/>
</dbReference>
<dbReference type="SMR" id="Q9JXR2"/>
<dbReference type="FunCoup" id="Q9JXR2">
    <property type="interactions" value="509"/>
</dbReference>
<dbReference type="STRING" id="122586.NMB1920"/>
<dbReference type="MEROPS" id="C26.957"/>
<dbReference type="PaxDb" id="122586-NMB1920"/>
<dbReference type="KEGG" id="nme:NMB1920"/>
<dbReference type="PATRIC" id="fig|122586.8.peg.2448"/>
<dbReference type="HOGENOM" id="CLU_014340_0_5_4"/>
<dbReference type="InParanoid" id="Q9JXR2"/>
<dbReference type="OrthoDB" id="9802219at2"/>
<dbReference type="UniPathway" id="UPA00189">
    <property type="reaction ID" value="UER00296"/>
</dbReference>
<dbReference type="Proteomes" id="UP000000425">
    <property type="component" value="Chromosome"/>
</dbReference>
<dbReference type="GO" id="GO:0005829">
    <property type="term" value="C:cytosol"/>
    <property type="evidence" value="ECO:0000318"/>
    <property type="project" value="GO_Central"/>
</dbReference>
<dbReference type="GO" id="GO:0005524">
    <property type="term" value="F:ATP binding"/>
    <property type="evidence" value="ECO:0007669"/>
    <property type="project" value="UniProtKB-UniRule"/>
</dbReference>
<dbReference type="GO" id="GO:0003921">
    <property type="term" value="F:GMP synthase activity"/>
    <property type="evidence" value="ECO:0000318"/>
    <property type="project" value="GO_Central"/>
</dbReference>
<dbReference type="GO" id="GO:0006177">
    <property type="term" value="P:GMP biosynthetic process"/>
    <property type="evidence" value="ECO:0000318"/>
    <property type="project" value="GO_Central"/>
</dbReference>
<dbReference type="CDD" id="cd01742">
    <property type="entry name" value="GATase1_GMP_Synthase"/>
    <property type="match status" value="1"/>
</dbReference>
<dbReference type="CDD" id="cd01997">
    <property type="entry name" value="GMP_synthase_C"/>
    <property type="match status" value="1"/>
</dbReference>
<dbReference type="FunFam" id="3.30.300.10:FF:000002">
    <property type="entry name" value="GMP synthase [glutamine-hydrolyzing]"/>
    <property type="match status" value="1"/>
</dbReference>
<dbReference type="FunFam" id="3.40.50.620:FF:000001">
    <property type="entry name" value="GMP synthase [glutamine-hydrolyzing]"/>
    <property type="match status" value="1"/>
</dbReference>
<dbReference type="FunFam" id="3.40.50.880:FF:000001">
    <property type="entry name" value="GMP synthase [glutamine-hydrolyzing]"/>
    <property type="match status" value="1"/>
</dbReference>
<dbReference type="Gene3D" id="3.30.300.10">
    <property type="match status" value="1"/>
</dbReference>
<dbReference type="Gene3D" id="3.40.50.880">
    <property type="match status" value="1"/>
</dbReference>
<dbReference type="Gene3D" id="3.40.50.620">
    <property type="entry name" value="HUPs"/>
    <property type="match status" value="1"/>
</dbReference>
<dbReference type="HAMAP" id="MF_00344">
    <property type="entry name" value="GMP_synthase"/>
    <property type="match status" value="1"/>
</dbReference>
<dbReference type="InterPro" id="IPR029062">
    <property type="entry name" value="Class_I_gatase-like"/>
</dbReference>
<dbReference type="InterPro" id="IPR017926">
    <property type="entry name" value="GATASE"/>
</dbReference>
<dbReference type="InterPro" id="IPR001674">
    <property type="entry name" value="GMP_synth_C"/>
</dbReference>
<dbReference type="InterPro" id="IPR004739">
    <property type="entry name" value="GMP_synth_GATase"/>
</dbReference>
<dbReference type="InterPro" id="IPR022955">
    <property type="entry name" value="GMP_synthase"/>
</dbReference>
<dbReference type="InterPro" id="IPR025777">
    <property type="entry name" value="GMPS_ATP_PPase_dom"/>
</dbReference>
<dbReference type="InterPro" id="IPR022310">
    <property type="entry name" value="NAD/GMP_synthase"/>
</dbReference>
<dbReference type="InterPro" id="IPR014729">
    <property type="entry name" value="Rossmann-like_a/b/a_fold"/>
</dbReference>
<dbReference type="NCBIfam" id="TIGR00884">
    <property type="entry name" value="guaA_Cterm"/>
    <property type="match status" value="1"/>
</dbReference>
<dbReference type="NCBIfam" id="TIGR00888">
    <property type="entry name" value="guaA_Nterm"/>
    <property type="match status" value="1"/>
</dbReference>
<dbReference type="NCBIfam" id="NF000848">
    <property type="entry name" value="PRK00074.1"/>
    <property type="match status" value="1"/>
</dbReference>
<dbReference type="PANTHER" id="PTHR11922:SF2">
    <property type="entry name" value="GMP SYNTHASE [GLUTAMINE-HYDROLYZING]"/>
    <property type="match status" value="1"/>
</dbReference>
<dbReference type="PANTHER" id="PTHR11922">
    <property type="entry name" value="GMP SYNTHASE-RELATED"/>
    <property type="match status" value="1"/>
</dbReference>
<dbReference type="Pfam" id="PF00117">
    <property type="entry name" value="GATase"/>
    <property type="match status" value="1"/>
</dbReference>
<dbReference type="Pfam" id="PF00958">
    <property type="entry name" value="GMP_synt_C"/>
    <property type="match status" value="1"/>
</dbReference>
<dbReference type="Pfam" id="PF02540">
    <property type="entry name" value="NAD_synthase"/>
    <property type="match status" value="1"/>
</dbReference>
<dbReference type="PRINTS" id="PR00097">
    <property type="entry name" value="ANTSNTHASEII"/>
</dbReference>
<dbReference type="PRINTS" id="PR00096">
    <property type="entry name" value="GATASE"/>
</dbReference>
<dbReference type="SUPFAM" id="SSF52402">
    <property type="entry name" value="Adenine nucleotide alpha hydrolases-like"/>
    <property type="match status" value="1"/>
</dbReference>
<dbReference type="SUPFAM" id="SSF52317">
    <property type="entry name" value="Class I glutamine amidotransferase-like"/>
    <property type="match status" value="1"/>
</dbReference>
<dbReference type="SUPFAM" id="SSF54810">
    <property type="entry name" value="GMP synthetase C-terminal dimerisation domain"/>
    <property type="match status" value="1"/>
</dbReference>
<dbReference type="PROSITE" id="PS51273">
    <property type="entry name" value="GATASE_TYPE_1"/>
    <property type="match status" value="1"/>
</dbReference>
<dbReference type="PROSITE" id="PS51553">
    <property type="entry name" value="GMPS_ATP_PPASE"/>
    <property type="match status" value="1"/>
</dbReference>
<keyword id="KW-0067">ATP-binding</keyword>
<keyword id="KW-0315">Glutamine amidotransferase</keyword>
<keyword id="KW-0332">GMP biosynthesis</keyword>
<keyword id="KW-0436">Ligase</keyword>
<keyword id="KW-0547">Nucleotide-binding</keyword>
<keyword id="KW-0658">Purine biosynthesis</keyword>
<keyword id="KW-1185">Reference proteome</keyword>